<organism>
    <name type="scientific">Pyricularia oryzae (strain 70-15 / ATCC MYA-4617 / FGSC 8958)</name>
    <name type="common">Rice blast fungus</name>
    <name type="synonym">Magnaporthe oryzae</name>
    <dbReference type="NCBI Taxonomy" id="242507"/>
    <lineage>
        <taxon>Eukaryota</taxon>
        <taxon>Fungi</taxon>
        <taxon>Dikarya</taxon>
        <taxon>Ascomycota</taxon>
        <taxon>Pezizomycotina</taxon>
        <taxon>Sordariomycetes</taxon>
        <taxon>Sordariomycetidae</taxon>
        <taxon>Magnaporthales</taxon>
        <taxon>Pyriculariaceae</taxon>
        <taxon>Pyricularia</taxon>
    </lineage>
</organism>
<sequence>MATARPSIVGPDSGPESPFPYKMEGKVISGFGRGSKELGIPTANLPVDATISPWISSISSGVYYGWASLQLPPSHPESPSSSSCSPYVVFPMVMSIGYNPFYNNTERSAEVHILHKFTADFYDAPMRLLILGFIRDEKNYDSLEALVKDINTDCDVARTSLDRKAWVPQGGLLHPAVDVREKQGDLDGSWLVRPNDSPSA</sequence>
<dbReference type="EC" id="2.7.1.26"/>
<dbReference type="EMBL" id="CM001234">
    <property type="protein sequence ID" value="EHA50724.1"/>
    <property type="molecule type" value="Genomic_DNA"/>
</dbReference>
<dbReference type="RefSeq" id="XP_003717043.1">
    <property type="nucleotide sequence ID" value="XM_003716995.1"/>
</dbReference>
<dbReference type="SMR" id="A4QQ05"/>
<dbReference type="FunCoup" id="A4QQ05">
    <property type="interactions" value="373"/>
</dbReference>
<dbReference type="STRING" id="242507.A4QQ05"/>
<dbReference type="EnsemblFungi" id="MGG_14853T0">
    <property type="protein sequence ID" value="MGG_14853T0"/>
    <property type="gene ID" value="MGG_14853"/>
</dbReference>
<dbReference type="GeneID" id="5048889"/>
<dbReference type="KEGG" id="mgr:MGG_14853"/>
<dbReference type="VEuPathDB" id="FungiDB:MGG_14853"/>
<dbReference type="eggNOG" id="KOG3110">
    <property type="taxonomic scope" value="Eukaryota"/>
</dbReference>
<dbReference type="HOGENOM" id="CLU_048437_3_2_1"/>
<dbReference type="InParanoid" id="A4QQ05"/>
<dbReference type="OMA" id="FDCEVAR"/>
<dbReference type="OrthoDB" id="276388at2759"/>
<dbReference type="UniPathway" id="UPA00276">
    <property type="reaction ID" value="UER00406"/>
</dbReference>
<dbReference type="Proteomes" id="UP000009058">
    <property type="component" value="Chromosome 4"/>
</dbReference>
<dbReference type="GO" id="GO:0005739">
    <property type="term" value="C:mitochondrion"/>
    <property type="evidence" value="ECO:0007669"/>
    <property type="project" value="TreeGrafter"/>
</dbReference>
<dbReference type="GO" id="GO:0005524">
    <property type="term" value="F:ATP binding"/>
    <property type="evidence" value="ECO:0007669"/>
    <property type="project" value="UniProtKB-KW"/>
</dbReference>
<dbReference type="GO" id="GO:0046872">
    <property type="term" value="F:metal ion binding"/>
    <property type="evidence" value="ECO:0007669"/>
    <property type="project" value="UniProtKB-KW"/>
</dbReference>
<dbReference type="GO" id="GO:0008531">
    <property type="term" value="F:riboflavin kinase activity"/>
    <property type="evidence" value="ECO:0007669"/>
    <property type="project" value="UniProtKB-EC"/>
</dbReference>
<dbReference type="GO" id="GO:0009398">
    <property type="term" value="P:FMN biosynthetic process"/>
    <property type="evidence" value="ECO:0007669"/>
    <property type="project" value="UniProtKB-UniPathway"/>
</dbReference>
<dbReference type="GO" id="GO:0009231">
    <property type="term" value="P:riboflavin biosynthetic process"/>
    <property type="evidence" value="ECO:0007669"/>
    <property type="project" value="InterPro"/>
</dbReference>
<dbReference type="Gene3D" id="2.40.30.30">
    <property type="entry name" value="Riboflavin kinase-like"/>
    <property type="match status" value="1"/>
</dbReference>
<dbReference type="InterPro" id="IPR023468">
    <property type="entry name" value="Riboflavin_kinase"/>
</dbReference>
<dbReference type="InterPro" id="IPR015865">
    <property type="entry name" value="Riboflavin_kinase_bac/euk"/>
</dbReference>
<dbReference type="InterPro" id="IPR023465">
    <property type="entry name" value="Riboflavin_kinase_dom_sf"/>
</dbReference>
<dbReference type="PANTHER" id="PTHR22749:SF6">
    <property type="entry name" value="RIBOFLAVIN KINASE"/>
    <property type="match status" value="1"/>
</dbReference>
<dbReference type="PANTHER" id="PTHR22749">
    <property type="entry name" value="RIBOFLAVIN KINASE/FMN ADENYLYLTRANSFERASE"/>
    <property type="match status" value="1"/>
</dbReference>
<dbReference type="Pfam" id="PF01687">
    <property type="entry name" value="Flavokinase"/>
    <property type="match status" value="1"/>
</dbReference>
<dbReference type="SMART" id="SM00904">
    <property type="entry name" value="Flavokinase"/>
    <property type="match status" value="1"/>
</dbReference>
<dbReference type="SUPFAM" id="SSF82114">
    <property type="entry name" value="Riboflavin kinase-like"/>
    <property type="match status" value="1"/>
</dbReference>
<proteinExistence type="inferred from homology"/>
<reference key="1">
    <citation type="journal article" date="2005" name="Nature">
        <title>The genome sequence of the rice blast fungus Magnaporthe grisea.</title>
        <authorList>
            <person name="Dean R.A."/>
            <person name="Talbot N.J."/>
            <person name="Ebbole D.J."/>
            <person name="Farman M.L."/>
            <person name="Mitchell T.K."/>
            <person name="Orbach M.J."/>
            <person name="Thon M.R."/>
            <person name="Kulkarni R."/>
            <person name="Xu J.-R."/>
            <person name="Pan H."/>
            <person name="Read N.D."/>
            <person name="Lee Y.-H."/>
            <person name="Carbone I."/>
            <person name="Brown D."/>
            <person name="Oh Y.Y."/>
            <person name="Donofrio N."/>
            <person name="Jeong J.S."/>
            <person name="Soanes D.M."/>
            <person name="Djonovic S."/>
            <person name="Kolomiets E."/>
            <person name="Rehmeyer C."/>
            <person name="Li W."/>
            <person name="Harding M."/>
            <person name="Kim S."/>
            <person name="Lebrun M.-H."/>
            <person name="Bohnert H."/>
            <person name="Coughlan S."/>
            <person name="Butler J."/>
            <person name="Calvo S.E."/>
            <person name="Ma L.-J."/>
            <person name="Nicol R."/>
            <person name="Purcell S."/>
            <person name="Nusbaum C."/>
            <person name="Galagan J.E."/>
            <person name="Birren B.W."/>
        </authorList>
    </citation>
    <scope>NUCLEOTIDE SEQUENCE [LARGE SCALE GENOMIC DNA]</scope>
    <source>
        <strain>70-15 / ATCC MYA-4617 / FGSC 8958</strain>
    </source>
</reference>
<name>RIFK_PYRO7</name>
<gene>
    <name type="primary">FMN1</name>
    <name type="ORF">MGG_14853</name>
</gene>
<evidence type="ECO:0000250" key="1"/>
<evidence type="ECO:0000250" key="2">
    <source>
        <dbReference type="UniProtKB" id="Q969G6"/>
    </source>
</evidence>
<evidence type="ECO:0000256" key="3">
    <source>
        <dbReference type="SAM" id="MobiDB-lite"/>
    </source>
</evidence>
<evidence type="ECO:0000305" key="4"/>
<comment type="function">
    <text evidence="1">Catalyzes the phosphorylation of riboflavin (vitamin B2) to form flavin mononucleotide (FMN) coenzyme.</text>
</comment>
<comment type="catalytic activity">
    <reaction>
        <text>riboflavin + ATP = FMN + ADP + H(+)</text>
        <dbReference type="Rhea" id="RHEA:14357"/>
        <dbReference type="ChEBI" id="CHEBI:15378"/>
        <dbReference type="ChEBI" id="CHEBI:30616"/>
        <dbReference type="ChEBI" id="CHEBI:57986"/>
        <dbReference type="ChEBI" id="CHEBI:58210"/>
        <dbReference type="ChEBI" id="CHEBI:456216"/>
        <dbReference type="EC" id="2.7.1.26"/>
    </reaction>
</comment>
<comment type="cofactor">
    <cofactor evidence="1">
        <name>Zn(2+)</name>
        <dbReference type="ChEBI" id="CHEBI:29105"/>
    </cofactor>
    <cofactor evidence="1">
        <name>Mg(2+)</name>
        <dbReference type="ChEBI" id="CHEBI:18420"/>
    </cofactor>
    <text evidence="1">Zinc or magnesium.</text>
</comment>
<comment type="pathway">
    <text>Cofactor biosynthesis; FMN biosynthesis; FMN from riboflavin (ATP route): step 1/1.</text>
</comment>
<comment type="similarity">
    <text evidence="4">Belongs to the flavokinase family.</text>
</comment>
<protein>
    <recommendedName>
        <fullName>Riboflavin kinase</fullName>
        <ecNumber>2.7.1.26</ecNumber>
    </recommendedName>
    <alternativeName>
        <fullName>Flavin mononucleotide kinase 1</fullName>
    </alternativeName>
</protein>
<keyword id="KW-0067">ATP-binding</keyword>
<keyword id="KW-0285">Flavoprotein</keyword>
<keyword id="KW-0288">FMN</keyword>
<keyword id="KW-0418">Kinase</keyword>
<keyword id="KW-0460">Magnesium</keyword>
<keyword id="KW-0479">Metal-binding</keyword>
<keyword id="KW-0547">Nucleotide-binding</keyword>
<keyword id="KW-1185">Reference proteome</keyword>
<keyword id="KW-0808">Transferase</keyword>
<keyword id="KW-0862">Zinc</keyword>
<feature type="chain" id="PRO_0000301844" description="Riboflavin kinase">
    <location>
        <begin position="1"/>
        <end position="200"/>
    </location>
</feature>
<feature type="region of interest" description="Disordered" evidence="3">
    <location>
        <begin position="1"/>
        <end position="20"/>
    </location>
</feature>
<feature type="active site" description="Nucleophile" evidence="1">
    <location>
        <position position="110"/>
    </location>
</feature>
<feature type="binding site" evidence="2">
    <location>
        <position position="42"/>
    </location>
    <ligand>
        <name>Mg(2+)</name>
        <dbReference type="ChEBI" id="CHEBI:18420"/>
    </ligand>
</feature>
<feature type="binding site" evidence="2">
    <location>
        <position position="44"/>
    </location>
    <ligand>
        <name>Mg(2+)</name>
        <dbReference type="ChEBI" id="CHEBI:18420"/>
    </ligand>
</feature>
<accession>A4QQ05</accession>
<accession>G4N6W0</accession>